<proteinExistence type="inferred from homology"/>
<feature type="signal peptide" evidence="1">
    <location>
        <begin position="1"/>
        <end position="19"/>
    </location>
</feature>
<feature type="chain" id="PRO_1000186093" description="Penicillin-insensitive murein endopeptidase">
    <location>
        <begin position="20"/>
        <end position="274"/>
    </location>
</feature>
<feature type="region of interest" description="Disordered" evidence="2">
    <location>
        <begin position="227"/>
        <end position="274"/>
    </location>
</feature>
<feature type="binding site" evidence="1">
    <location>
        <position position="110"/>
    </location>
    <ligand>
        <name>Zn(2+)</name>
        <dbReference type="ChEBI" id="CHEBI:29105"/>
        <label>1</label>
    </ligand>
</feature>
<feature type="binding site" evidence="1">
    <location>
        <position position="113"/>
    </location>
    <ligand>
        <name>Zn(2+)</name>
        <dbReference type="ChEBI" id="CHEBI:29105"/>
        <label>1</label>
    </ligand>
</feature>
<feature type="binding site" evidence="1">
    <location>
        <position position="120"/>
    </location>
    <ligand>
        <name>Zn(2+)</name>
        <dbReference type="ChEBI" id="CHEBI:29105"/>
        <label>1</label>
    </ligand>
</feature>
<feature type="binding site" evidence="1">
    <location>
        <position position="147"/>
    </location>
    <ligand>
        <name>Zn(2+)</name>
        <dbReference type="ChEBI" id="CHEBI:29105"/>
        <label>2</label>
    </ligand>
</feature>
<feature type="binding site" evidence="1">
    <location>
        <position position="150"/>
    </location>
    <ligand>
        <name>Zn(2+)</name>
        <dbReference type="ChEBI" id="CHEBI:29105"/>
        <label>2</label>
    </ligand>
</feature>
<feature type="binding site" evidence="1">
    <location>
        <position position="211"/>
    </location>
    <ligand>
        <name>Zn(2+)</name>
        <dbReference type="ChEBI" id="CHEBI:29105"/>
        <label>1</label>
    </ligand>
</feature>
<feature type="disulfide bond" evidence="1">
    <location>
        <begin position="44"/>
        <end position="265"/>
    </location>
</feature>
<feature type="disulfide bond" evidence="1">
    <location>
        <begin position="187"/>
        <end position="235"/>
    </location>
</feature>
<feature type="disulfide bond" evidence="1">
    <location>
        <begin position="216"/>
        <end position="223"/>
    </location>
</feature>
<sequence length="274" mass="30196">MNKTAIALLALLASSASLAATPWQKITQPVPGSAQSIGSFSNGCIVGADTLPIQSEHYQVMRTDQRRYFGHPDLVMFIQRLSRQVSNLGMGTVLIGDMGMPAGGRFNGGHASHQTGLDVDIFLQLPKTRWTSAQLLRPQALDLVSRDGKHVVPALWKPEIFSLIKLAAQDKDVTRIFVNPAIKQQLCLDAGTDRDWLRKVRPWFQHRAHMHVRLRCPADSLECEDQPLPPPGDGCGAELQSWFEPPKPGTTKPEKKTPPPLPPSCQALLDEHVI</sequence>
<comment type="function">
    <text evidence="1">Murein endopeptidase that cleaves the D-alanyl-meso-2,6-diamino-pimelyl amide bond that connects peptidoglycan strands. Likely plays a role in the removal of murein from the sacculus.</text>
</comment>
<comment type="cofactor">
    <cofactor evidence="1">
        <name>Zn(2+)</name>
        <dbReference type="ChEBI" id="CHEBI:29105"/>
    </cofactor>
    <text evidence="1">Binds 2 Zn(2+) ions per subunit. Zn(2+) ion 1 is bound in the active site. Zn(2+) ion 2 is bound at the dimer interface by residues from both subunits.</text>
</comment>
<comment type="subunit">
    <text evidence="1">Dimer.</text>
</comment>
<comment type="subcellular location">
    <subcellularLocation>
        <location evidence="1">Periplasm</location>
    </subcellularLocation>
</comment>
<comment type="similarity">
    <text evidence="1">Belongs to the peptidase M74 family.</text>
</comment>
<name>MEPA_ECO45</name>
<gene>
    <name evidence="1" type="primary">mepA</name>
    <name type="ordered locus">ECS88_2476</name>
</gene>
<keyword id="KW-1015">Disulfide bond</keyword>
<keyword id="KW-0378">Hydrolase</keyword>
<keyword id="KW-0479">Metal-binding</keyword>
<keyword id="KW-0482">Metalloprotease</keyword>
<keyword id="KW-0574">Periplasm</keyword>
<keyword id="KW-0645">Protease</keyword>
<keyword id="KW-1185">Reference proteome</keyword>
<keyword id="KW-0732">Signal</keyword>
<keyword id="KW-0862">Zinc</keyword>
<evidence type="ECO:0000255" key="1">
    <source>
        <dbReference type="HAMAP-Rule" id="MF_01623"/>
    </source>
</evidence>
<evidence type="ECO:0000256" key="2">
    <source>
        <dbReference type="SAM" id="MobiDB-lite"/>
    </source>
</evidence>
<accession>B7MG92</accession>
<dbReference type="EC" id="3.4.24.-" evidence="1"/>
<dbReference type="EMBL" id="CU928161">
    <property type="protein sequence ID" value="CAR03754.1"/>
    <property type="molecule type" value="Genomic_DNA"/>
</dbReference>
<dbReference type="RefSeq" id="WP_001043802.1">
    <property type="nucleotide sequence ID" value="NC_011742.1"/>
</dbReference>
<dbReference type="SMR" id="B7MG92"/>
<dbReference type="MEROPS" id="M74.001"/>
<dbReference type="KEGG" id="ecz:ECS88_2476"/>
<dbReference type="HOGENOM" id="CLU_052496_0_0_6"/>
<dbReference type="Proteomes" id="UP000000747">
    <property type="component" value="Chromosome"/>
</dbReference>
<dbReference type="GO" id="GO:0030288">
    <property type="term" value="C:outer membrane-bounded periplasmic space"/>
    <property type="evidence" value="ECO:0007669"/>
    <property type="project" value="InterPro"/>
</dbReference>
<dbReference type="GO" id="GO:0046872">
    <property type="term" value="F:metal ion binding"/>
    <property type="evidence" value="ECO:0007669"/>
    <property type="project" value="UniProtKB-KW"/>
</dbReference>
<dbReference type="GO" id="GO:0004222">
    <property type="term" value="F:metalloendopeptidase activity"/>
    <property type="evidence" value="ECO:0007669"/>
    <property type="project" value="UniProtKB-UniRule"/>
</dbReference>
<dbReference type="GO" id="GO:0004252">
    <property type="term" value="F:serine-type endopeptidase activity"/>
    <property type="evidence" value="ECO:0007669"/>
    <property type="project" value="InterPro"/>
</dbReference>
<dbReference type="GO" id="GO:0000270">
    <property type="term" value="P:peptidoglycan metabolic process"/>
    <property type="evidence" value="ECO:0007669"/>
    <property type="project" value="UniProtKB-UniRule"/>
</dbReference>
<dbReference type="GO" id="GO:0006508">
    <property type="term" value="P:proteolysis"/>
    <property type="evidence" value="ECO:0007669"/>
    <property type="project" value="UniProtKB-KW"/>
</dbReference>
<dbReference type="FunFam" id="3.30.1380.10:FF:000002">
    <property type="entry name" value="Penicillin-insensitive murein endopeptidase"/>
    <property type="match status" value="1"/>
</dbReference>
<dbReference type="Gene3D" id="3.30.1380.10">
    <property type="match status" value="1"/>
</dbReference>
<dbReference type="HAMAP" id="MF_01623">
    <property type="entry name" value="MepA"/>
    <property type="match status" value="1"/>
</dbReference>
<dbReference type="InterPro" id="IPR009045">
    <property type="entry name" value="Hedgehog_sig/DD-Pept_Zn-bd_sf"/>
</dbReference>
<dbReference type="InterPro" id="IPR005073">
    <property type="entry name" value="Peptidase_M74"/>
</dbReference>
<dbReference type="NCBIfam" id="NF006947">
    <property type="entry name" value="PRK09429.1"/>
    <property type="match status" value="1"/>
</dbReference>
<dbReference type="Pfam" id="PF03411">
    <property type="entry name" value="Peptidase_M74"/>
    <property type="match status" value="1"/>
</dbReference>
<dbReference type="PIRSF" id="PIRSF018455">
    <property type="entry name" value="MepA"/>
    <property type="match status" value="1"/>
</dbReference>
<dbReference type="SUPFAM" id="SSF55166">
    <property type="entry name" value="Hedgehog/DD-peptidase"/>
    <property type="match status" value="1"/>
</dbReference>
<protein>
    <recommendedName>
        <fullName evidence="1">Penicillin-insensitive murein endopeptidase</fullName>
        <ecNumber evidence="1">3.4.24.-</ecNumber>
    </recommendedName>
    <alternativeName>
        <fullName evidence="1">D-alanyl-D-alanine-endopeptidase</fullName>
        <shortName evidence="1">DD-endopeptidase</shortName>
    </alternativeName>
</protein>
<reference key="1">
    <citation type="journal article" date="2009" name="PLoS Genet.">
        <title>Organised genome dynamics in the Escherichia coli species results in highly diverse adaptive paths.</title>
        <authorList>
            <person name="Touchon M."/>
            <person name="Hoede C."/>
            <person name="Tenaillon O."/>
            <person name="Barbe V."/>
            <person name="Baeriswyl S."/>
            <person name="Bidet P."/>
            <person name="Bingen E."/>
            <person name="Bonacorsi S."/>
            <person name="Bouchier C."/>
            <person name="Bouvet O."/>
            <person name="Calteau A."/>
            <person name="Chiapello H."/>
            <person name="Clermont O."/>
            <person name="Cruveiller S."/>
            <person name="Danchin A."/>
            <person name="Diard M."/>
            <person name="Dossat C."/>
            <person name="Karoui M.E."/>
            <person name="Frapy E."/>
            <person name="Garry L."/>
            <person name="Ghigo J.M."/>
            <person name="Gilles A.M."/>
            <person name="Johnson J."/>
            <person name="Le Bouguenec C."/>
            <person name="Lescat M."/>
            <person name="Mangenot S."/>
            <person name="Martinez-Jehanne V."/>
            <person name="Matic I."/>
            <person name="Nassif X."/>
            <person name="Oztas S."/>
            <person name="Petit M.A."/>
            <person name="Pichon C."/>
            <person name="Rouy Z."/>
            <person name="Ruf C.S."/>
            <person name="Schneider D."/>
            <person name="Tourret J."/>
            <person name="Vacherie B."/>
            <person name="Vallenet D."/>
            <person name="Medigue C."/>
            <person name="Rocha E.P.C."/>
            <person name="Denamur E."/>
        </authorList>
    </citation>
    <scope>NUCLEOTIDE SEQUENCE [LARGE SCALE GENOMIC DNA]</scope>
    <source>
        <strain>S88 / ExPEC</strain>
    </source>
</reference>
<organism>
    <name type="scientific">Escherichia coli O45:K1 (strain S88 / ExPEC)</name>
    <dbReference type="NCBI Taxonomy" id="585035"/>
    <lineage>
        <taxon>Bacteria</taxon>
        <taxon>Pseudomonadati</taxon>
        <taxon>Pseudomonadota</taxon>
        <taxon>Gammaproteobacteria</taxon>
        <taxon>Enterobacterales</taxon>
        <taxon>Enterobacteriaceae</taxon>
        <taxon>Escherichia</taxon>
    </lineage>
</organism>